<feature type="chain" id="PRO_0000383108" description="Coatomer subunit zeta">
    <location>
        <begin position="1"/>
        <end position="165"/>
    </location>
</feature>
<organism>
    <name type="scientific">Encephalitozoon cuniculi (strain GB-M1)</name>
    <name type="common">Microsporidian parasite</name>
    <dbReference type="NCBI Taxonomy" id="284813"/>
    <lineage>
        <taxon>Eukaryota</taxon>
        <taxon>Fungi</taxon>
        <taxon>Fungi incertae sedis</taxon>
        <taxon>Microsporidia</taxon>
        <taxon>Unikaryonidae</taxon>
        <taxon>Encephalitozoon</taxon>
    </lineage>
</organism>
<protein>
    <recommendedName>
        <fullName>Coatomer subunit zeta</fullName>
    </recommendedName>
    <alternativeName>
        <fullName>Zeta-coat protein</fullName>
        <shortName>Zeta-COP</shortName>
    </alternativeName>
</protein>
<accession>Q8SRD1</accession>
<name>COPZ_ENCCU</name>
<reference key="1">
    <citation type="journal article" date="2001" name="Nature">
        <title>Genome sequence and gene compaction of the eukaryote parasite Encephalitozoon cuniculi.</title>
        <authorList>
            <person name="Katinka M.D."/>
            <person name="Duprat S."/>
            <person name="Cornillot E."/>
            <person name="Metenier G."/>
            <person name="Thomarat F."/>
            <person name="Prensier G."/>
            <person name="Barbe V."/>
            <person name="Peyretaillade E."/>
            <person name="Brottier P."/>
            <person name="Wincker P."/>
            <person name="Delbac F."/>
            <person name="El Alaoui H."/>
            <person name="Peyret P."/>
            <person name="Saurin W."/>
            <person name="Gouy M."/>
            <person name="Weissenbach J."/>
            <person name="Vivares C.P."/>
        </authorList>
    </citation>
    <scope>NUCLEOTIDE SEQUENCE [LARGE SCALE GENOMIC DNA]</scope>
    <source>
        <strain>GB-M1</strain>
    </source>
</reference>
<reference key="2">
    <citation type="journal article" date="2006" name="Proteomics">
        <title>Proteomic analysis of the eukaryotic parasite Encephalitozoon cuniculi (microsporidia): a reference map for proteins expressed in late sporogonial stages.</title>
        <authorList>
            <person name="Brosson D."/>
            <person name="Kuhn L."/>
            <person name="Delbac F."/>
            <person name="Garin J."/>
            <person name="Vivares C.P."/>
            <person name="Texier C."/>
        </authorList>
    </citation>
    <scope>IDENTIFICATION BY MASS SPECTROMETRY [LARGE SCALE ANALYSIS]</scope>
    <scope>DEVELOPMENTAL STAGE</scope>
</reference>
<evidence type="ECO:0000250" key="1"/>
<evidence type="ECO:0000250" key="2">
    <source>
        <dbReference type="UniProtKB" id="P53600"/>
    </source>
</evidence>
<evidence type="ECO:0000269" key="3">
    <source>
    </source>
</evidence>
<evidence type="ECO:0000305" key="4"/>
<proteinExistence type="evidence at protein level"/>
<comment type="function">
    <text evidence="2">The coatomer is a cytosolic protein complex that binds to dilysine motifs and reversibly associates with Golgi non-clathrin-coated vesicles, which further mediate biosynthetic protein transport from the ER, via the Golgi up to the trans Golgi network. Coatomer complex is required for budding from Golgi membranes, and is essential for the retrograde Golgi-to-ER transport of dilysine-tagged proteins (By similarity). The zeta subunit may be involved in regulating the coat assembly and, hence, the rate of biosynthetic protein transport due to its association-dissociation properties with the coatomer complex (By similarity).</text>
</comment>
<comment type="subunit">
    <text evidence="1">Oligomeric complex that consists of at least the alpha, beta, beta', gamma, delta, epsilon and zeta subunits.</text>
</comment>
<comment type="subcellular location">
    <subcellularLocation>
        <location evidence="1">Cytoplasm</location>
    </subcellularLocation>
    <subcellularLocation>
        <location evidence="1">Golgi apparatus membrane</location>
        <topology evidence="1">Peripheral membrane protein</topology>
        <orientation evidence="1">Cytoplasmic side</orientation>
    </subcellularLocation>
    <subcellularLocation>
        <location evidence="1">Cytoplasmic vesicle</location>
        <location evidence="1">COPI-coated vesicle membrane</location>
        <topology evidence="1">Peripheral membrane protein</topology>
        <orientation evidence="1">Cytoplasmic side</orientation>
    </subcellularLocation>
    <text evidence="1">The coatomer is cytoplasmic or polymerized on the cytoplasmic side of the Golgi, as well as on the vesicles/buds originating from it.</text>
</comment>
<comment type="developmental stage">
    <text evidence="3">Expressed in late sporogonial stages.</text>
</comment>
<comment type="similarity">
    <text evidence="4">Belongs to the adaptor complexes small subunit family.</text>
</comment>
<gene>
    <name type="ordered locus">ECU08_0680</name>
</gene>
<dbReference type="EMBL" id="AL590448">
    <property type="protein sequence ID" value="CAD26373.1"/>
    <property type="molecule type" value="Genomic_DNA"/>
</dbReference>
<dbReference type="RefSeq" id="NP_597197.1">
    <property type="nucleotide sequence ID" value="NM_001041806.1"/>
</dbReference>
<dbReference type="SMR" id="Q8SRD1"/>
<dbReference type="STRING" id="284813.Q8SRD1"/>
<dbReference type="GeneID" id="859619"/>
<dbReference type="KEGG" id="ecu:ECU08_0680"/>
<dbReference type="VEuPathDB" id="MicrosporidiaDB:ECU08_0680"/>
<dbReference type="HOGENOM" id="CLU_129942_0_0_1"/>
<dbReference type="InParanoid" id="Q8SRD1"/>
<dbReference type="OMA" id="FYTAVIK"/>
<dbReference type="OrthoDB" id="10249988at2759"/>
<dbReference type="Proteomes" id="UP000000819">
    <property type="component" value="Chromosome VIII"/>
</dbReference>
<dbReference type="GO" id="GO:0030663">
    <property type="term" value="C:COPI-coated vesicle membrane"/>
    <property type="evidence" value="ECO:0007669"/>
    <property type="project" value="UniProtKB-SubCell"/>
</dbReference>
<dbReference type="GO" id="GO:0000139">
    <property type="term" value="C:Golgi membrane"/>
    <property type="evidence" value="ECO:0007669"/>
    <property type="project" value="UniProtKB-SubCell"/>
</dbReference>
<dbReference type="GO" id="GO:0015031">
    <property type="term" value="P:protein transport"/>
    <property type="evidence" value="ECO:0007669"/>
    <property type="project" value="UniProtKB-KW"/>
</dbReference>
<dbReference type="GO" id="GO:0016192">
    <property type="term" value="P:vesicle-mediated transport"/>
    <property type="evidence" value="ECO:0007669"/>
    <property type="project" value="UniProtKB-KW"/>
</dbReference>
<dbReference type="Gene3D" id="3.30.450.60">
    <property type="match status" value="1"/>
</dbReference>
<dbReference type="InterPro" id="IPR011012">
    <property type="entry name" value="Longin-like_dom_sf"/>
</dbReference>
<dbReference type="SUPFAM" id="SSF64356">
    <property type="entry name" value="SNARE-like"/>
    <property type="match status" value="1"/>
</dbReference>
<sequence length="165" mass="18742">MNLFDIEGLLVADSQGEILYRRVFSKEEEIAAKIAEKAAGDRESISMFYDRIVMCKRLDEVLLIIYSPMDVNEPFVGQVFDEFTAAFIGIVKTPTRERVWKKYDQIVLLVAEFLYEGIVMSGKSDEMLDKLPKRNFEGVDGMKVPRGFASFLHKATKSLSIGSNK</sequence>
<keyword id="KW-0963">Cytoplasm</keyword>
<keyword id="KW-0968">Cytoplasmic vesicle</keyword>
<keyword id="KW-0931">ER-Golgi transport</keyword>
<keyword id="KW-0333">Golgi apparatus</keyword>
<keyword id="KW-0472">Membrane</keyword>
<keyword id="KW-0653">Protein transport</keyword>
<keyword id="KW-1185">Reference proteome</keyword>
<keyword id="KW-0813">Transport</keyword>